<keyword id="KW-0130">Cell adhesion</keyword>
<keyword id="KW-1015">Disulfide bond</keyword>
<keyword id="KW-0245">EGF-like domain</keyword>
<keyword id="KW-0325">Glycoprotein</keyword>
<keyword id="KW-0472">Membrane</keyword>
<keyword id="KW-1185">Reference proteome</keyword>
<keyword id="KW-0732">Signal</keyword>
<keyword id="KW-0812">Transmembrane</keyword>
<keyword id="KW-1133">Transmembrane helix</keyword>
<protein>
    <recommendedName>
        <fullName>Integrin beta-like protein E</fullName>
    </recommendedName>
</protein>
<sequence length="1946" mass="206822">MNNLFKFLFVLLAIFCPPISDLVVSHGVPQQHITIIKFTTNFAFRTTFYKTSSSSIVIGEKITLGTLTFGDGSSTSVRASVTSFDTKNDWFFGQFIFTKTYTALTPNNSKQYLAMFTSCCRISTLLNNKDADWNITSSVYLDNKNWPSVNHSPVSGMLPIVQVIANKNNNFRVIASDPNVDDKLSFSFSTVYPMTQPSGMKINSTGHVFFLPTSVGLYSTQIYITDDAVPPAYAVVDFILESITEPGKCDPSCSNGGATCNGNSECKNCANAGSTTSNTCSTTNYPPYFVSPTPQDNQLIPFTVGQPNSITLSCKSDYTTRTVGIQAANVPAGAAIAEGTSSQGTVKNILSWTPVAANVGVYVTSIFCYDSNGLTSSSRSFTIFIAKPECGNGHKDPSTGKCKCDGDKWDPTSNCFDCSTGYYGQNCDPTPPCDKGIPNEGILGDGKCMCINGYSGDKCDVPLSQSCKDLKNSILLSTSVPSFFVNPTKVQLYIESDFALTTSLNIPQKLTKIDVFVLVDVNVASSTLFGVVQSSISTFVTEVSKSICETTQFGIGYFSDASSSGFNFAPGSIIGSNIVNTINGYAVSSYTSTSSGNSLLGATNAASNSNGWNSGSFKAIVVLTDKDHSSNSAAITNFVNTYISNSIAPVVVGFGASSIPNWNSAISTADFGYSTVSAATSIDISAKAVAGLKSVLSNVVYKTDNTTNGASFVKSTPSDVAVSSTADTVKTVSGLVLTKPSATSIVSPVASVSAIGFGQTDFSINYNRPPTPTGTAFSVNQNSFATFKLTGTDPDFNILTFAFTTFLTSDVGVITDSNNKDVSTQKSKYYDSTETFTFTPAINYLLPISVSFVANDGCLNSTTSATVSITINKVNQLPTCQQKTISPTLNVANKFVLSASDFEDATPFIQFTSPTDLTAYGTLTFGGVAVTSTSKIPTSSEITFTQTVNPTNAIDVPVSFQAVDSVGAISTSTCTLTVKLVHTNIKPVSSSTSPISVIPRGSVSLTLVSTDSDSTSAKFTIKSVNKGAKGDFYTCSTNDCTCNSTQTNIYTSISTTTTYTSISYTNKVANKLICFTNGEPSAISNYASISFTSTDNQGLESDSVNVVVNIVGNRTNVAPVVTKIQGYSVYQDYLDSDAHVVTGTDADIDDYNPPNVNNLIAIITTPPSNGILVTLQNGSIAATQGKAPFTHYYRPNPGFKGTDSYSYQVVDTFKAGSSIESTTVTVNPINHKPSVVVSSYSFTSQSGDGETQDLVTSDPDGDSVICSVVSIPSQIGMYDSDGNLIESVPTVLSGTSYSFKLLDPSKITPTPFTSVSSSFAVKCTDVTTKTIPFGTLSTGVVTANVQYTYINTPPTTQGGTVQLDQDTVKVFTFNGSDIETPKDDIKVKILSLPINGQLLINATGVALTTTNIASETYNLNALSYKPNAGLSNWNTIDQQSPLDSISYTVIDQQGLTSDSDIVYFSVRPRNPPVYTGARVIDVLQNTRYPLTITSRIGGGGSEVNIQVIGFTNNGTLSIAHNMGSEGTMDSEITSYPNQQSGSTSYNYAYMPPRNKYGNDFDFIYFKLFDGDLYSELYTVTVNVIHVNQPPTIELVSYKILDGVSSEVLFENTSLINMNINTTVLIKYSGNDIDVDQVTPLISMIPNFPLRGSLYAYNPTASNSSGAPITRNSSNVEQNADGFYYVVFVPSKKTSGESYARITFIMTDNGGLNSPIVGVLINVNTVNIAPFVIIGNKNYTTQTNLTASVMGVQFDDPDSTTNNVSIVVSIVGQKDDKVASLKDIKLSFTQSPMCEYHQTLASITCIGPKKPLNSSIVSISVIASTAGDYRLKLFVDDLGYNAPSAIRAQSHLNATGYVDVKVNAPEATTQTTNNKTVLTGAIAGAAAGTALIAAAAWKLLRKAAPPTDTFFSEAAFLGDGVNANPLYEQSASAAENPLYQSASDNTD</sequence>
<comment type="function">
    <text evidence="5">Implicated in cellular adhesion.</text>
</comment>
<comment type="subunit">
    <text evidence="4">Interacts with talA/talin.</text>
</comment>
<comment type="subcellular location">
    <subcellularLocation>
        <location evidence="5">Membrane</location>
        <topology evidence="5">Single-pass type I membrane protein</topology>
    </subcellularLocation>
</comment>
<comment type="similarity">
    <text evidence="5">Belongs to the SIB family.</text>
</comment>
<dbReference type="EMBL" id="AAFI02000109">
    <property type="protein sequence ID" value="EAL63350.1"/>
    <property type="molecule type" value="Genomic_DNA"/>
</dbReference>
<dbReference type="RefSeq" id="XP_636833.1">
    <property type="nucleotide sequence ID" value="XM_631741.1"/>
</dbReference>
<dbReference type="IntAct" id="Q54JA3">
    <property type="interactions" value="1"/>
</dbReference>
<dbReference type="MINT" id="Q54JA3"/>
<dbReference type="STRING" id="44689.Q54JA3"/>
<dbReference type="GlyCosmos" id="Q54JA3">
    <property type="glycosylation" value="21 sites, No reported glycans"/>
</dbReference>
<dbReference type="GlyGen" id="Q54JA3">
    <property type="glycosylation" value="24 sites"/>
</dbReference>
<dbReference type="PaxDb" id="44689-DDB0233519"/>
<dbReference type="EnsemblProtists" id="EAL63350">
    <property type="protein sequence ID" value="EAL63350"/>
    <property type="gene ID" value="DDB_G0288239"/>
</dbReference>
<dbReference type="GeneID" id="8626502"/>
<dbReference type="KEGG" id="ddi:DDB_G0288239"/>
<dbReference type="dictyBase" id="DDB_G0288239">
    <property type="gene designation" value="sibE"/>
</dbReference>
<dbReference type="VEuPathDB" id="AmoebaDB:DDB_G0288239"/>
<dbReference type="HOGENOM" id="CLU_234725_0_0_1"/>
<dbReference type="InParanoid" id="Q54JA3"/>
<dbReference type="PhylomeDB" id="Q54JA3"/>
<dbReference type="PRO" id="PR:Q54JA3"/>
<dbReference type="Proteomes" id="UP000002195">
    <property type="component" value="Chromosome 5"/>
</dbReference>
<dbReference type="GO" id="GO:0016020">
    <property type="term" value="C:membrane"/>
    <property type="evidence" value="ECO:0007669"/>
    <property type="project" value="UniProtKB-SubCell"/>
</dbReference>
<dbReference type="GO" id="GO:0007155">
    <property type="term" value="P:cell adhesion"/>
    <property type="evidence" value="ECO:0007669"/>
    <property type="project" value="UniProtKB-KW"/>
</dbReference>
<dbReference type="Gene3D" id="3.40.50.410">
    <property type="entry name" value="von Willebrand factor, type A domain"/>
    <property type="match status" value="1"/>
</dbReference>
<dbReference type="InterPro" id="IPR000742">
    <property type="entry name" value="EGF-like_dom"/>
</dbReference>
<dbReference type="InterPro" id="IPR056851">
    <property type="entry name" value="Ig_SibA-E"/>
</dbReference>
<dbReference type="InterPro" id="IPR056847">
    <property type="entry name" value="Ig_SibA-E_2nd"/>
</dbReference>
<dbReference type="InterPro" id="IPR056849">
    <property type="entry name" value="Ig_SibA-E_3rd"/>
</dbReference>
<dbReference type="InterPro" id="IPR056844">
    <property type="entry name" value="SibA-E_N"/>
</dbReference>
<dbReference type="InterPro" id="IPR002035">
    <property type="entry name" value="VWF_A"/>
</dbReference>
<dbReference type="InterPro" id="IPR036465">
    <property type="entry name" value="vWFA_dom_sf"/>
</dbReference>
<dbReference type="PANTHER" id="PTHR24038:SF11">
    <property type="entry name" value="INTEGRIN BETA-LIKE PROTEIN E"/>
    <property type="match status" value="1"/>
</dbReference>
<dbReference type="PANTHER" id="PTHR24038">
    <property type="entry name" value="STABILIN"/>
    <property type="match status" value="1"/>
</dbReference>
<dbReference type="Pfam" id="PF24619">
    <property type="entry name" value="Ig_SibA"/>
    <property type="match status" value="1"/>
</dbReference>
<dbReference type="Pfam" id="PF24908">
    <property type="entry name" value="Ig_SIBA-E_2nd"/>
    <property type="match status" value="1"/>
</dbReference>
<dbReference type="Pfam" id="PF24910">
    <property type="entry name" value="Ig_SIBA-E_3rd"/>
    <property type="match status" value="1"/>
</dbReference>
<dbReference type="Pfam" id="PF24907">
    <property type="entry name" value="SIBA-E_N"/>
    <property type="match status" value="1"/>
</dbReference>
<dbReference type="Pfam" id="PF24909">
    <property type="entry name" value="vWA_SIBA-E"/>
    <property type="match status" value="1"/>
</dbReference>
<dbReference type="SUPFAM" id="SSF53300">
    <property type="entry name" value="vWA-like"/>
    <property type="match status" value="1"/>
</dbReference>
<dbReference type="PROSITE" id="PS00022">
    <property type="entry name" value="EGF_1"/>
    <property type="match status" value="1"/>
</dbReference>
<dbReference type="PROSITE" id="PS01186">
    <property type="entry name" value="EGF_2"/>
    <property type="match status" value="1"/>
</dbReference>
<dbReference type="PROSITE" id="PS50234">
    <property type="entry name" value="VWFA"/>
    <property type="match status" value="1"/>
</dbReference>
<feature type="signal peptide" evidence="2">
    <location>
        <begin position="1"/>
        <end position="22"/>
    </location>
</feature>
<feature type="chain" id="PRO_0000312335" description="Integrin beta-like protein E">
    <location>
        <begin position="23"/>
        <end position="1946"/>
    </location>
</feature>
<feature type="topological domain" description="Extracellular" evidence="2">
    <location>
        <begin position="23"/>
        <end position="1875"/>
    </location>
</feature>
<feature type="transmembrane region" description="Helical" evidence="2">
    <location>
        <begin position="1876"/>
        <end position="1896"/>
    </location>
</feature>
<feature type="topological domain" description="Cytoplasmic" evidence="2">
    <location>
        <begin position="1897"/>
        <end position="1946"/>
    </location>
</feature>
<feature type="domain" description="EGF-like">
    <location>
        <begin position="423"/>
        <end position="460"/>
    </location>
</feature>
<feature type="domain" description="VWFA" evidence="3">
    <location>
        <begin position="514"/>
        <end position="699"/>
    </location>
</feature>
<feature type="glycosylation site" description="N-linked (GlcNAc...) asparagine" evidence="2">
    <location>
        <position position="107"/>
    </location>
</feature>
<feature type="glycosylation site" description="N-linked (GlcNAc...) asparagine" evidence="2">
    <location>
        <position position="134"/>
    </location>
</feature>
<feature type="glycosylation site" description="N-linked (GlcNAc...) asparagine" evidence="2">
    <location>
        <position position="203"/>
    </location>
</feature>
<feature type="glycosylation site" description="N-linked (GlcNAc...) asparagine" evidence="2">
    <location>
        <position position="705"/>
    </location>
</feature>
<feature type="glycosylation site" description="N-linked (GlcNAc...) asparagine" evidence="2">
    <location>
        <position position="860"/>
    </location>
</feature>
<feature type="glycosylation site" description="N-linked (GlcNAc...) asparagine" evidence="2">
    <location>
        <position position="1043"/>
    </location>
</feature>
<feature type="glycosylation site" description="N-linked (GlcNAc...) asparagine" evidence="2">
    <location>
        <position position="1113"/>
    </location>
</feature>
<feature type="glycosylation site" description="N-linked (GlcNAc...) asparagine" evidence="2">
    <location>
        <position position="1177"/>
    </location>
</feature>
<feature type="glycosylation site" description="N-linked (GlcNAc...) asparagine" evidence="2">
    <location>
        <position position="1374"/>
    </location>
</feature>
<feature type="glycosylation site" description="N-linked (GlcNAc...) asparagine" evidence="2">
    <location>
        <position position="1401"/>
    </location>
</feature>
<feature type="glycosylation site" description="N-linked (GlcNAc...) asparagine" evidence="2">
    <location>
        <position position="1513"/>
    </location>
</feature>
<feature type="glycosylation site" description="N-linked (GlcNAc...) asparagine" evidence="2">
    <location>
        <position position="1611"/>
    </location>
</feature>
<feature type="glycosylation site" description="N-linked (GlcNAc...) asparagine" evidence="2">
    <location>
        <position position="1620"/>
    </location>
</feature>
<feature type="glycosylation site" description="N-linked (GlcNAc...) asparagine" evidence="2">
    <location>
        <position position="1662"/>
    </location>
</feature>
<feature type="glycosylation site" description="N-linked (GlcNAc...) asparagine" evidence="2">
    <location>
        <position position="1671"/>
    </location>
</feature>
<feature type="glycosylation site" description="N-linked (GlcNAc...) asparagine" evidence="2">
    <location>
        <position position="1737"/>
    </location>
</feature>
<feature type="glycosylation site" description="N-linked (GlcNAc...) asparagine" evidence="2">
    <location>
        <position position="1743"/>
    </location>
</feature>
<feature type="glycosylation site" description="N-linked (GlcNAc...) asparagine" evidence="2">
    <location>
        <position position="1762"/>
    </location>
</feature>
<feature type="glycosylation site" description="N-linked (GlcNAc...) asparagine" evidence="2">
    <location>
        <position position="1812"/>
    </location>
</feature>
<feature type="glycosylation site" description="N-linked (GlcNAc...) asparagine" evidence="2">
    <location>
        <position position="1852"/>
    </location>
</feature>
<feature type="glycosylation site" description="N-linked (GlcNAc...) asparagine" evidence="2">
    <location>
        <position position="1873"/>
    </location>
</feature>
<feature type="disulfide bond" evidence="1">
    <location>
        <begin position="433"/>
        <end position="448"/>
    </location>
</feature>
<feature type="disulfide bond" evidence="1">
    <location>
        <begin position="450"/>
        <end position="459"/>
    </location>
</feature>
<reference key="1">
    <citation type="journal article" date="2005" name="Nature">
        <title>The genome of the social amoeba Dictyostelium discoideum.</title>
        <authorList>
            <person name="Eichinger L."/>
            <person name="Pachebat J.A."/>
            <person name="Gloeckner G."/>
            <person name="Rajandream M.A."/>
            <person name="Sucgang R."/>
            <person name="Berriman M."/>
            <person name="Song J."/>
            <person name="Olsen R."/>
            <person name="Szafranski K."/>
            <person name="Xu Q."/>
            <person name="Tunggal B."/>
            <person name="Kummerfeld S."/>
            <person name="Madera M."/>
            <person name="Konfortov B.A."/>
            <person name="Rivero F."/>
            <person name="Bankier A.T."/>
            <person name="Lehmann R."/>
            <person name="Hamlin N."/>
            <person name="Davies R."/>
            <person name="Gaudet P."/>
            <person name="Fey P."/>
            <person name="Pilcher K."/>
            <person name="Chen G."/>
            <person name="Saunders D."/>
            <person name="Sodergren E.J."/>
            <person name="Davis P."/>
            <person name="Kerhornou A."/>
            <person name="Nie X."/>
            <person name="Hall N."/>
            <person name="Anjard C."/>
            <person name="Hemphill L."/>
            <person name="Bason N."/>
            <person name="Farbrother P."/>
            <person name="Desany B."/>
            <person name="Just E."/>
            <person name="Morio T."/>
            <person name="Rost R."/>
            <person name="Churcher C.M."/>
            <person name="Cooper J."/>
            <person name="Haydock S."/>
            <person name="van Driessche N."/>
            <person name="Cronin A."/>
            <person name="Goodhead I."/>
            <person name="Muzny D.M."/>
            <person name="Mourier T."/>
            <person name="Pain A."/>
            <person name="Lu M."/>
            <person name="Harper D."/>
            <person name="Lindsay R."/>
            <person name="Hauser H."/>
            <person name="James K.D."/>
            <person name="Quiles M."/>
            <person name="Madan Babu M."/>
            <person name="Saito T."/>
            <person name="Buchrieser C."/>
            <person name="Wardroper A."/>
            <person name="Felder M."/>
            <person name="Thangavelu M."/>
            <person name="Johnson D."/>
            <person name="Knights A."/>
            <person name="Loulseged H."/>
            <person name="Mungall K.L."/>
            <person name="Oliver K."/>
            <person name="Price C."/>
            <person name="Quail M.A."/>
            <person name="Urushihara H."/>
            <person name="Hernandez J."/>
            <person name="Rabbinowitsch E."/>
            <person name="Steffen D."/>
            <person name="Sanders M."/>
            <person name="Ma J."/>
            <person name="Kohara Y."/>
            <person name="Sharp S."/>
            <person name="Simmonds M.N."/>
            <person name="Spiegler S."/>
            <person name="Tivey A."/>
            <person name="Sugano S."/>
            <person name="White B."/>
            <person name="Walker D."/>
            <person name="Woodward J.R."/>
            <person name="Winckler T."/>
            <person name="Tanaka Y."/>
            <person name="Shaulsky G."/>
            <person name="Schleicher M."/>
            <person name="Weinstock G.M."/>
            <person name="Rosenthal A."/>
            <person name="Cox E.C."/>
            <person name="Chisholm R.L."/>
            <person name="Gibbs R.A."/>
            <person name="Loomis W.F."/>
            <person name="Platzer M."/>
            <person name="Kay R.R."/>
            <person name="Williams J.G."/>
            <person name="Dear P.H."/>
            <person name="Noegel A.A."/>
            <person name="Barrell B.G."/>
            <person name="Kuspa A."/>
        </authorList>
    </citation>
    <scope>NUCLEOTIDE SEQUENCE [LARGE SCALE GENOMIC DNA]</scope>
    <source>
        <strain>AX4</strain>
    </source>
</reference>
<reference key="2">
    <citation type="journal article" date="2006" name="EMBO Rep.">
        <title>An adhesion molecule in free-living Dictyostelium amoebae with integrin beta features.</title>
        <authorList>
            <person name="Cornillon S."/>
            <person name="Gebbie L."/>
            <person name="Benghezal M."/>
            <person name="Nair P."/>
            <person name="Keller S."/>
            <person name="Wehrle-Haller B."/>
            <person name="Charette S.J."/>
            <person name="Brueckert F."/>
            <person name="Letourneur F."/>
            <person name="Cosson P."/>
        </authorList>
    </citation>
    <scope>IDENTIFICATION</scope>
    <scope>INTERACTION WITH TALA</scope>
</reference>
<accession>Q54JA3</accession>
<organism>
    <name type="scientific">Dictyostelium discoideum</name>
    <name type="common">Social amoeba</name>
    <dbReference type="NCBI Taxonomy" id="44689"/>
    <lineage>
        <taxon>Eukaryota</taxon>
        <taxon>Amoebozoa</taxon>
        <taxon>Evosea</taxon>
        <taxon>Eumycetozoa</taxon>
        <taxon>Dictyostelia</taxon>
        <taxon>Dictyosteliales</taxon>
        <taxon>Dictyosteliaceae</taxon>
        <taxon>Dictyostelium</taxon>
    </lineage>
</organism>
<gene>
    <name type="primary">sibE</name>
    <name type="ORF">DDB_G0288239</name>
</gene>
<evidence type="ECO:0000250" key="1"/>
<evidence type="ECO:0000255" key="2"/>
<evidence type="ECO:0000255" key="3">
    <source>
        <dbReference type="PROSITE-ProRule" id="PRU00219"/>
    </source>
</evidence>
<evidence type="ECO:0000269" key="4">
    <source>
    </source>
</evidence>
<evidence type="ECO:0000305" key="5"/>
<name>SIBE_DICDI</name>
<proteinExistence type="evidence at protein level"/>